<feature type="chain" id="PRO_0000361250" description="Putative S-adenosyl-L-methionine-dependent methyltransferase MUL_4761">
    <location>
        <begin position="1"/>
        <end position="311"/>
    </location>
</feature>
<feature type="binding site" evidence="1">
    <location>
        <position position="132"/>
    </location>
    <ligand>
        <name>S-adenosyl-L-methionine</name>
        <dbReference type="ChEBI" id="CHEBI:59789"/>
    </ligand>
</feature>
<feature type="binding site" evidence="1">
    <location>
        <begin position="161"/>
        <end position="162"/>
    </location>
    <ligand>
        <name>S-adenosyl-L-methionine</name>
        <dbReference type="ChEBI" id="CHEBI:59789"/>
    </ligand>
</feature>
<protein>
    <recommendedName>
        <fullName>Putative S-adenosyl-L-methionine-dependent methyltransferase MUL_4761</fullName>
        <ecNumber>2.1.1.-</ecNumber>
    </recommendedName>
</protein>
<proteinExistence type="inferred from homology"/>
<keyword id="KW-0489">Methyltransferase</keyword>
<keyword id="KW-0949">S-adenosyl-L-methionine</keyword>
<keyword id="KW-0808">Transferase</keyword>
<name>Y4761_MYCUA</name>
<reference key="1">
    <citation type="journal article" date="2007" name="Genome Res.">
        <title>Reductive evolution and niche adaptation inferred from the genome of Mycobacterium ulcerans, the causative agent of Buruli ulcer.</title>
        <authorList>
            <person name="Stinear T.P."/>
            <person name="Seemann T."/>
            <person name="Pidot S."/>
            <person name="Frigui W."/>
            <person name="Reysset G."/>
            <person name="Garnier T."/>
            <person name="Meurice G."/>
            <person name="Simon D."/>
            <person name="Bouchier C."/>
            <person name="Ma L."/>
            <person name="Tichit M."/>
            <person name="Porter J.L."/>
            <person name="Ryan J."/>
            <person name="Johnson P.D.R."/>
            <person name="Davies J.K."/>
            <person name="Jenkin G.A."/>
            <person name="Small P.L.C."/>
            <person name="Jones L.M."/>
            <person name="Tekaia F."/>
            <person name="Laval F."/>
            <person name="Daffe M."/>
            <person name="Parkhill J."/>
            <person name="Cole S.T."/>
        </authorList>
    </citation>
    <scope>NUCLEOTIDE SEQUENCE [LARGE SCALE GENOMIC DNA]</scope>
    <source>
        <strain>Agy99</strain>
    </source>
</reference>
<evidence type="ECO:0000250" key="1"/>
<evidence type="ECO:0000305" key="2"/>
<gene>
    <name type="ordered locus">MUL_4761</name>
</gene>
<sequence length="311" mass="34129">MPRTADDSWDIATSVGATAVMVALARAAETASETPLIRDQFAEPLVSTPELAAVREQVAAWWAQTDDDDDPDFTVDSQQMTDYLAVRTHFFDSYFIDAVAAGIRQVVILAAGLDSRAYRLDWPGGTMVYEIDLPKVLDYKEHTLARHGAAPVAALRAVPVDLRHDWPQALRDAGFQTSLPTAWLAEGLLPFLPAAAQHALFTAIDANSATGSRVAVEMFGVDEDARRAAEERAQRWARQRAKRQARGQDTSFDPFDLWFDDEGQPDPADWFAAHGWTTDSVQVGAEALRLGRTATSQEGPFVNRFVTAGKP</sequence>
<accession>A0PWG2</accession>
<dbReference type="EC" id="2.1.1.-"/>
<dbReference type="EMBL" id="CP000325">
    <property type="protein sequence ID" value="ABL06681.1"/>
    <property type="status" value="ALT_FRAME"/>
    <property type="molecule type" value="Genomic_DNA"/>
</dbReference>
<dbReference type="SMR" id="A0PWG2"/>
<dbReference type="KEGG" id="mul:MUL_4761"/>
<dbReference type="eggNOG" id="COG3315">
    <property type="taxonomic scope" value="Bacteria"/>
</dbReference>
<dbReference type="HOGENOM" id="CLU_056160_2_1_11"/>
<dbReference type="Proteomes" id="UP000000765">
    <property type="component" value="Chromosome"/>
</dbReference>
<dbReference type="GO" id="GO:0008168">
    <property type="term" value="F:methyltransferase activity"/>
    <property type="evidence" value="ECO:0007669"/>
    <property type="project" value="UniProtKB-KW"/>
</dbReference>
<dbReference type="GO" id="GO:0032259">
    <property type="term" value="P:methylation"/>
    <property type="evidence" value="ECO:0007669"/>
    <property type="project" value="UniProtKB-KW"/>
</dbReference>
<dbReference type="Gene3D" id="3.40.50.150">
    <property type="entry name" value="Vaccinia Virus protein VP39"/>
    <property type="match status" value="1"/>
</dbReference>
<dbReference type="InterPro" id="IPR007213">
    <property type="entry name" value="Ppm1/Ppm2/Tcmp"/>
</dbReference>
<dbReference type="InterPro" id="IPR029063">
    <property type="entry name" value="SAM-dependent_MTases_sf"/>
</dbReference>
<dbReference type="InterPro" id="IPR011610">
    <property type="entry name" value="SAM_mthyl_Trfase_ML2640-like"/>
</dbReference>
<dbReference type="NCBIfam" id="TIGR00027">
    <property type="entry name" value="mthyl_TIGR00027"/>
    <property type="match status" value="1"/>
</dbReference>
<dbReference type="PANTHER" id="PTHR43619">
    <property type="entry name" value="S-ADENOSYL-L-METHIONINE-DEPENDENT METHYLTRANSFERASE YKTD-RELATED"/>
    <property type="match status" value="1"/>
</dbReference>
<dbReference type="PANTHER" id="PTHR43619:SF2">
    <property type="entry name" value="S-ADENOSYL-L-METHIONINE-DEPENDENT METHYLTRANSFERASES SUPERFAMILY PROTEIN"/>
    <property type="match status" value="1"/>
</dbReference>
<dbReference type="Pfam" id="PF04072">
    <property type="entry name" value="LCM"/>
    <property type="match status" value="1"/>
</dbReference>
<dbReference type="SUPFAM" id="SSF53335">
    <property type="entry name" value="S-adenosyl-L-methionine-dependent methyltransferases"/>
    <property type="match status" value="1"/>
</dbReference>
<comment type="function">
    <text evidence="1">Exhibits S-adenosyl-L-methionine-dependent methyltransferase activity.</text>
</comment>
<comment type="similarity">
    <text evidence="2">Belongs to the UPF0677 family.</text>
</comment>
<comment type="sequence caution" evidence="2">
    <conflict type="frameshift">
        <sequence resource="EMBL-CDS" id="ABL06681"/>
    </conflict>
</comment>
<organism>
    <name type="scientific">Mycobacterium ulcerans (strain Agy99)</name>
    <dbReference type="NCBI Taxonomy" id="362242"/>
    <lineage>
        <taxon>Bacteria</taxon>
        <taxon>Bacillati</taxon>
        <taxon>Actinomycetota</taxon>
        <taxon>Actinomycetes</taxon>
        <taxon>Mycobacteriales</taxon>
        <taxon>Mycobacteriaceae</taxon>
        <taxon>Mycobacterium</taxon>
        <taxon>Mycobacterium ulcerans group</taxon>
    </lineage>
</organism>